<evidence type="ECO:0000255" key="1">
    <source>
        <dbReference type="HAMAP-Rule" id="MF_00501"/>
    </source>
</evidence>
<evidence type="ECO:0000256" key="2">
    <source>
        <dbReference type="SAM" id="MobiDB-lite"/>
    </source>
</evidence>
<evidence type="ECO:0000305" key="3"/>
<name>RL31_PROMP</name>
<sequence>MPKSEIHPKWYPDAKVICNGEVVMTTGSTKPELHVDVWSGNHPFFTGTQKILDTEGRVDRFMKKYGMGSADSATSKETKESKKSDK</sequence>
<gene>
    <name evidence="1" type="primary">rpmE</name>
    <name evidence="1" type="synonym">rpl31</name>
    <name type="ordered locus">PMM1530</name>
</gene>
<accession>Q7UZX0</accession>
<dbReference type="EMBL" id="BX548174">
    <property type="protein sequence ID" value="CAE19989.1"/>
    <property type="molecule type" value="Genomic_DNA"/>
</dbReference>
<dbReference type="RefSeq" id="WP_011133158.1">
    <property type="nucleotide sequence ID" value="NC_005072.1"/>
</dbReference>
<dbReference type="STRING" id="59919.PMM1530"/>
<dbReference type="KEGG" id="pmm:PMM1530"/>
<dbReference type="eggNOG" id="COG0254">
    <property type="taxonomic scope" value="Bacteria"/>
</dbReference>
<dbReference type="HOGENOM" id="CLU_114306_1_2_3"/>
<dbReference type="OrthoDB" id="9803251at2"/>
<dbReference type="Proteomes" id="UP000001026">
    <property type="component" value="Chromosome"/>
</dbReference>
<dbReference type="GO" id="GO:1990904">
    <property type="term" value="C:ribonucleoprotein complex"/>
    <property type="evidence" value="ECO:0007669"/>
    <property type="project" value="UniProtKB-KW"/>
</dbReference>
<dbReference type="GO" id="GO:0005840">
    <property type="term" value="C:ribosome"/>
    <property type="evidence" value="ECO:0007669"/>
    <property type="project" value="UniProtKB-KW"/>
</dbReference>
<dbReference type="GO" id="GO:0019843">
    <property type="term" value="F:rRNA binding"/>
    <property type="evidence" value="ECO:0007669"/>
    <property type="project" value="UniProtKB-KW"/>
</dbReference>
<dbReference type="GO" id="GO:0003735">
    <property type="term" value="F:structural constituent of ribosome"/>
    <property type="evidence" value="ECO:0007669"/>
    <property type="project" value="InterPro"/>
</dbReference>
<dbReference type="GO" id="GO:0006412">
    <property type="term" value="P:translation"/>
    <property type="evidence" value="ECO:0007669"/>
    <property type="project" value="UniProtKB-UniRule"/>
</dbReference>
<dbReference type="Gene3D" id="4.10.830.30">
    <property type="entry name" value="Ribosomal protein L31"/>
    <property type="match status" value="1"/>
</dbReference>
<dbReference type="HAMAP" id="MF_00501">
    <property type="entry name" value="Ribosomal_bL31_1"/>
    <property type="match status" value="1"/>
</dbReference>
<dbReference type="InterPro" id="IPR034704">
    <property type="entry name" value="Ribosomal_bL28/bL31-like_sf"/>
</dbReference>
<dbReference type="InterPro" id="IPR002150">
    <property type="entry name" value="Ribosomal_bL31"/>
</dbReference>
<dbReference type="InterPro" id="IPR027491">
    <property type="entry name" value="Ribosomal_bL31_A"/>
</dbReference>
<dbReference type="InterPro" id="IPR042105">
    <property type="entry name" value="Ribosomal_bL31_sf"/>
</dbReference>
<dbReference type="NCBIfam" id="TIGR00105">
    <property type="entry name" value="L31"/>
    <property type="match status" value="1"/>
</dbReference>
<dbReference type="NCBIfam" id="NF000612">
    <property type="entry name" value="PRK00019.1"/>
    <property type="match status" value="1"/>
</dbReference>
<dbReference type="NCBIfam" id="NF001809">
    <property type="entry name" value="PRK00528.1"/>
    <property type="match status" value="1"/>
</dbReference>
<dbReference type="PANTHER" id="PTHR33280">
    <property type="entry name" value="50S RIBOSOMAL PROTEIN L31, CHLOROPLASTIC"/>
    <property type="match status" value="1"/>
</dbReference>
<dbReference type="PANTHER" id="PTHR33280:SF1">
    <property type="entry name" value="LARGE RIBOSOMAL SUBUNIT PROTEIN BL31C"/>
    <property type="match status" value="1"/>
</dbReference>
<dbReference type="Pfam" id="PF01197">
    <property type="entry name" value="Ribosomal_L31"/>
    <property type="match status" value="1"/>
</dbReference>
<dbReference type="PRINTS" id="PR01249">
    <property type="entry name" value="RIBOSOMALL31"/>
</dbReference>
<dbReference type="SUPFAM" id="SSF143800">
    <property type="entry name" value="L28p-like"/>
    <property type="match status" value="1"/>
</dbReference>
<dbReference type="PROSITE" id="PS01143">
    <property type="entry name" value="RIBOSOMAL_L31"/>
    <property type="match status" value="1"/>
</dbReference>
<organism>
    <name type="scientific">Prochlorococcus marinus subsp. pastoris (strain CCMP1986 / NIES-2087 / MED4)</name>
    <dbReference type="NCBI Taxonomy" id="59919"/>
    <lineage>
        <taxon>Bacteria</taxon>
        <taxon>Bacillati</taxon>
        <taxon>Cyanobacteriota</taxon>
        <taxon>Cyanophyceae</taxon>
        <taxon>Synechococcales</taxon>
        <taxon>Prochlorococcaceae</taxon>
        <taxon>Prochlorococcus</taxon>
    </lineage>
</organism>
<reference key="1">
    <citation type="journal article" date="2003" name="Nature">
        <title>Genome divergence in two Prochlorococcus ecotypes reflects oceanic niche differentiation.</title>
        <authorList>
            <person name="Rocap G."/>
            <person name="Larimer F.W."/>
            <person name="Lamerdin J.E."/>
            <person name="Malfatti S."/>
            <person name="Chain P."/>
            <person name="Ahlgren N.A."/>
            <person name="Arellano A."/>
            <person name="Coleman M."/>
            <person name="Hauser L."/>
            <person name="Hess W.R."/>
            <person name="Johnson Z.I."/>
            <person name="Land M.L."/>
            <person name="Lindell D."/>
            <person name="Post A.F."/>
            <person name="Regala W."/>
            <person name="Shah M."/>
            <person name="Shaw S.L."/>
            <person name="Steglich C."/>
            <person name="Sullivan M.B."/>
            <person name="Ting C.S."/>
            <person name="Tolonen A."/>
            <person name="Webb E.A."/>
            <person name="Zinser E.R."/>
            <person name="Chisholm S.W."/>
        </authorList>
    </citation>
    <scope>NUCLEOTIDE SEQUENCE [LARGE SCALE GENOMIC DNA]</scope>
    <source>
        <strain>CCMP1986 / NIES-2087 / MED4</strain>
    </source>
</reference>
<comment type="function">
    <text evidence="1">Binds the 23S rRNA.</text>
</comment>
<comment type="subunit">
    <text evidence="1">Part of the 50S ribosomal subunit.</text>
</comment>
<comment type="similarity">
    <text evidence="1">Belongs to the bacterial ribosomal protein bL31 family. Type A subfamily.</text>
</comment>
<keyword id="KW-0687">Ribonucleoprotein</keyword>
<keyword id="KW-0689">Ribosomal protein</keyword>
<keyword id="KW-0694">RNA-binding</keyword>
<keyword id="KW-0699">rRNA-binding</keyword>
<feature type="chain" id="PRO_0000173146" description="Large ribosomal subunit protein bL31">
    <location>
        <begin position="1"/>
        <end position="86"/>
    </location>
</feature>
<feature type="region of interest" description="Disordered" evidence="2">
    <location>
        <begin position="65"/>
        <end position="86"/>
    </location>
</feature>
<feature type="compositionally biased region" description="Basic and acidic residues" evidence="2">
    <location>
        <begin position="74"/>
        <end position="86"/>
    </location>
</feature>
<proteinExistence type="inferred from homology"/>
<protein>
    <recommendedName>
        <fullName evidence="1">Large ribosomal subunit protein bL31</fullName>
    </recommendedName>
    <alternativeName>
        <fullName evidence="3">50S ribosomal protein L31</fullName>
    </alternativeName>
</protein>